<proteinExistence type="inferred from homology"/>
<feature type="chain" id="PRO_0000124249" description="Small ribosomal subunit protein uS7">
    <location>
        <begin position="1"/>
        <end position="156"/>
    </location>
</feature>
<protein>
    <recommendedName>
        <fullName evidence="1">Small ribosomal subunit protein uS7</fullName>
    </recommendedName>
    <alternativeName>
        <fullName evidence="2">30S ribosomal protein S7</fullName>
    </alternativeName>
</protein>
<accession>Q97EH3</accession>
<organism>
    <name type="scientific">Clostridium acetobutylicum (strain ATCC 824 / DSM 792 / JCM 1419 / IAM 19013 / LMG 5710 / NBRC 13948 / NRRL B-527 / VKM B-1787 / 2291 / W)</name>
    <dbReference type="NCBI Taxonomy" id="272562"/>
    <lineage>
        <taxon>Bacteria</taxon>
        <taxon>Bacillati</taxon>
        <taxon>Bacillota</taxon>
        <taxon>Clostridia</taxon>
        <taxon>Eubacteriales</taxon>
        <taxon>Clostridiaceae</taxon>
        <taxon>Clostridium</taxon>
    </lineage>
</organism>
<name>RS7_CLOAB</name>
<reference key="1">
    <citation type="journal article" date="2001" name="J. Bacteriol.">
        <title>Genome sequence and comparative analysis of the solvent-producing bacterium Clostridium acetobutylicum.</title>
        <authorList>
            <person name="Noelling J."/>
            <person name="Breton G."/>
            <person name="Omelchenko M.V."/>
            <person name="Makarova K.S."/>
            <person name="Zeng Q."/>
            <person name="Gibson R."/>
            <person name="Lee H.M."/>
            <person name="Dubois J."/>
            <person name="Qiu D."/>
            <person name="Hitti J."/>
            <person name="Wolf Y.I."/>
            <person name="Tatusov R.L."/>
            <person name="Sabathe F."/>
            <person name="Doucette-Stamm L.A."/>
            <person name="Soucaille P."/>
            <person name="Daly M.J."/>
            <person name="Bennett G.N."/>
            <person name="Koonin E.V."/>
            <person name="Smith D.R."/>
        </authorList>
    </citation>
    <scope>NUCLEOTIDE SEQUENCE [LARGE SCALE GENOMIC DNA]</scope>
    <source>
        <strain>ATCC 824 / DSM 792 / JCM 1419 / IAM 19013 / LMG 5710 / NBRC 13948 / NRRL B-527 / VKM B-1787 / 2291 / W</strain>
    </source>
</reference>
<gene>
    <name evidence="1" type="primary">rpsG</name>
    <name type="ordered locus">CA_C3139</name>
</gene>
<evidence type="ECO:0000255" key="1">
    <source>
        <dbReference type="HAMAP-Rule" id="MF_00480"/>
    </source>
</evidence>
<evidence type="ECO:0000305" key="2"/>
<dbReference type="EMBL" id="AE001437">
    <property type="protein sequence ID" value="AAK81077.1"/>
    <property type="molecule type" value="Genomic_DNA"/>
</dbReference>
<dbReference type="PIR" id="B97286">
    <property type="entry name" value="B97286"/>
</dbReference>
<dbReference type="RefSeq" id="NP_349737.1">
    <property type="nucleotide sequence ID" value="NC_003030.1"/>
</dbReference>
<dbReference type="RefSeq" id="WP_010966417.1">
    <property type="nucleotide sequence ID" value="NC_003030.1"/>
</dbReference>
<dbReference type="SMR" id="Q97EH3"/>
<dbReference type="STRING" id="272562.CA_C3139"/>
<dbReference type="GeneID" id="44999625"/>
<dbReference type="KEGG" id="cac:CA_C3139"/>
<dbReference type="PATRIC" id="fig|272562.8.peg.3320"/>
<dbReference type="eggNOG" id="COG0049">
    <property type="taxonomic scope" value="Bacteria"/>
</dbReference>
<dbReference type="HOGENOM" id="CLU_072226_1_1_9"/>
<dbReference type="OrthoDB" id="9807653at2"/>
<dbReference type="Proteomes" id="UP000000814">
    <property type="component" value="Chromosome"/>
</dbReference>
<dbReference type="GO" id="GO:0015935">
    <property type="term" value="C:small ribosomal subunit"/>
    <property type="evidence" value="ECO:0007669"/>
    <property type="project" value="InterPro"/>
</dbReference>
<dbReference type="GO" id="GO:0019843">
    <property type="term" value="F:rRNA binding"/>
    <property type="evidence" value="ECO:0007669"/>
    <property type="project" value="UniProtKB-UniRule"/>
</dbReference>
<dbReference type="GO" id="GO:0003735">
    <property type="term" value="F:structural constituent of ribosome"/>
    <property type="evidence" value="ECO:0007669"/>
    <property type="project" value="InterPro"/>
</dbReference>
<dbReference type="GO" id="GO:0000049">
    <property type="term" value="F:tRNA binding"/>
    <property type="evidence" value="ECO:0007669"/>
    <property type="project" value="UniProtKB-UniRule"/>
</dbReference>
<dbReference type="GO" id="GO:0006412">
    <property type="term" value="P:translation"/>
    <property type="evidence" value="ECO:0007669"/>
    <property type="project" value="UniProtKB-UniRule"/>
</dbReference>
<dbReference type="CDD" id="cd14869">
    <property type="entry name" value="uS7_Bacteria"/>
    <property type="match status" value="1"/>
</dbReference>
<dbReference type="FunFam" id="1.10.455.10:FF:000001">
    <property type="entry name" value="30S ribosomal protein S7"/>
    <property type="match status" value="1"/>
</dbReference>
<dbReference type="Gene3D" id="1.10.455.10">
    <property type="entry name" value="Ribosomal protein S7 domain"/>
    <property type="match status" value="1"/>
</dbReference>
<dbReference type="HAMAP" id="MF_00480_B">
    <property type="entry name" value="Ribosomal_uS7_B"/>
    <property type="match status" value="1"/>
</dbReference>
<dbReference type="InterPro" id="IPR000235">
    <property type="entry name" value="Ribosomal_uS7"/>
</dbReference>
<dbReference type="InterPro" id="IPR005717">
    <property type="entry name" value="Ribosomal_uS7_bac/org-type"/>
</dbReference>
<dbReference type="InterPro" id="IPR020606">
    <property type="entry name" value="Ribosomal_uS7_CS"/>
</dbReference>
<dbReference type="InterPro" id="IPR023798">
    <property type="entry name" value="Ribosomal_uS7_dom"/>
</dbReference>
<dbReference type="InterPro" id="IPR036823">
    <property type="entry name" value="Ribosomal_uS7_dom_sf"/>
</dbReference>
<dbReference type="NCBIfam" id="TIGR01029">
    <property type="entry name" value="rpsG_bact"/>
    <property type="match status" value="1"/>
</dbReference>
<dbReference type="PANTHER" id="PTHR11205">
    <property type="entry name" value="RIBOSOMAL PROTEIN S7"/>
    <property type="match status" value="1"/>
</dbReference>
<dbReference type="Pfam" id="PF00177">
    <property type="entry name" value="Ribosomal_S7"/>
    <property type="match status" value="1"/>
</dbReference>
<dbReference type="PIRSF" id="PIRSF002122">
    <property type="entry name" value="RPS7p_RPS7a_RPS5e_RPS7o"/>
    <property type="match status" value="1"/>
</dbReference>
<dbReference type="SUPFAM" id="SSF47973">
    <property type="entry name" value="Ribosomal protein S7"/>
    <property type="match status" value="1"/>
</dbReference>
<dbReference type="PROSITE" id="PS00052">
    <property type="entry name" value="RIBOSOMAL_S7"/>
    <property type="match status" value="1"/>
</dbReference>
<sequence>MPRKGHIAKRDVLPDPLYNSKVVTKLINNIMEDGKKGVAQKICYNAFEYLKEKTGKEPMEVFEAAMNNVMPLLEVKARRIGGATYQVPIEVRPERRQTLGIRWMLAAADKRGEKYMHLKLAGELLDASNNTGAAVKKREDTHKMAEANKAFAHYRY</sequence>
<comment type="function">
    <text evidence="1">One of the primary rRNA binding proteins, it binds directly to 16S rRNA where it nucleates assembly of the head domain of the 30S subunit. Is located at the subunit interface close to the decoding center, probably blocks exit of the E-site tRNA.</text>
</comment>
<comment type="subunit">
    <text evidence="1">Part of the 30S ribosomal subunit. Contacts proteins S9 and S11.</text>
</comment>
<comment type="similarity">
    <text evidence="1">Belongs to the universal ribosomal protein uS7 family.</text>
</comment>
<keyword id="KW-1185">Reference proteome</keyword>
<keyword id="KW-0687">Ribonucleoprotein</keyword>
<keyword id="KW-0689">Ribosomal protein</keyword>
<keyword id="KW-0694">RNA-binding</keyword>
<keyword id="KW-0699">rRNA-binding</keyword>
<keyword id="KW-0820">tRNA-binding</keyword>